<dbReference type="EMBL" id="DS547145">
    <property type="protein sequence ID" value="EDR00919.1"/>
    <property type="molecule type" value="Genomic_DNA"/>
</dbReference>
<dbReference type="RefSeq" id="XP_001888513.1">
    <property type="nucleotide sequence ID" value="XM_001888478.1"/>
</dbReference>
<dbReference type="STRING" id="486041.B0DX25"/>
<dbReference type="GeneID" id="6084080"/>
<dbReference type="KEGG" id="lbc:LACBIDRAFT_312896"/>
<dbReference type="HOGENOM" id="CLU_098333_0_2_1"/>
<dbReference type="InParanoid" id="B0DX25"/>
<dbReference type="OrthoDB" id="307488at2759"/>
<dbReference type="Proteomes" id="UP000001194">
    <property type="component" value="Unassembled WGS sequence"/>
</dbReference>
<dbReference type="GO" id="GO:0005634">
    <property type="term" value="C:nucleus"/>
    <property type="evidence" value="ECO:0007669"/>
    <property type="project" value="UniProtKB-SubCell"/>
</dbReference>
<dbReference type="GO" id="GO:0008157">
    <property type="term" value="F:protein phosphatase 1 binding"/>
    <property type="evidence" value="ECO:0007669"/>
    <property type="project" value="TreeGrafter"/>
</dbReference>
<dbReference type="GO" id="GO:0004865">
    <property type="term" value="F:protein serine/threonine phosphatase inhibitor activity"/>
    <property type="evidence" value="ECO:0007669"/>
    <property type="project" value="InterPro"/>
</dbReference>
<dbReference type="InterPro" id="IPR011107">
    <property type="entry name" value="PPI_Ypi1"/>
</dbReference>
<dbReference type="PANTHER" id="PTHR20835:SF0">
    <property type="entry name" value="E3 UBIQUITIN-PROTEIN LIGASE PPP1R11"/>
    <property type="match status" value="1"/>
</dbReference>
<dbReference type="PANTHER" id="PTHR20835">
    <property type="entry name" value="E3 UBIQUITIN-PROTEIN LIGASE PPP1R11-RELATED"/>
    <property type="match status" value="1"/>
</dbReference>
<dbReference type="Pfam" id="PF07491">
    <property type="entry name" value="PPI_Ypi1"/>
    <property type="match status" value="1"/>
</dbReference>
<gene>
    <name type="primary">YPI1</name>
    <name type="ORF">LACBIDRAFT_312896</name>
</gene>
<organism>
    <name type="scientific">Laccaria bicolor (strain S238N-H82 / ATCC MYA-4686)</name>
    <name type="common">Bicoloured deceiver</name>
    <name type="synonym">Laccaria laccata var. bicolor</name>
    <dbReference type="NCBI Taxonomy" id="486041"/>
    <lineage>
        <taxon>Eukaryota</taxon>
        <taxon>Fungi</taxon>
        <taxon>Dikarya</taxon>
        <taxon>Basidiomycota</taxon>
        <taxon>Agaricomycotina</taxon>
        <taxon>Agaricomycetes</taxon>
        <taxon>Agaricomycetidae</taxon>
        <taxon>Agaricales</taxon>
        <taxon>Agaricineae</taxon>
        <taxon>Hydnangiaceae</taxon>
        <taxon>Laccaria</taxon>
    </lineage>
</organism>
<name>YPI1_LACBS</name>
<protein>
    <recommendedName>
        <fullName>Type 1 phosphatases regulator YPI1</fullName>
    </recommendedName>
</protein>
<accession>B0DX25</accession>
<feature type="chain" id="PRO_0000333477" description="Type 1 phosphatases regulator YPI1">
    <location>
        <begin position="1"/>
        <end position="157"/>
    </location>
</feature>
<feature type="region of interest" description="Disordered" evidence="2">
    <location>
        <begin position="1"/>
        <end position="76"/>
    </location>
</feature>
<feature type="region of interest" description="Disordered" evidence="2">
    <location>
        <begin position="92"/>
        <end position="157"/>
    </location>
</feature>
<feature type="compositionally biased region" description="Basic and acidic residues" evidence="2">
    <location>
        <begin position="1"/>
        <end position="10"/>
    </location>
</feature>
<feature type="compositionally biased region" description="Polar residues" evidence="2">
    <location>
        <begin position="11"/>
        <end position="29"/>
    </location>
</feature>
<feature type="compositionally biased region" description="Low complexity" evidence="2">
    <location>
        <begin position="53"/>
        <end position="63"/>
    </location>
</feature>
<proteinExistence type="inferred from homology"/>
<keyword id="KW-0539">Nucleus</keyword>
<keyword id="KW-1185">Reference proteome</keyword>
<reference key="1">
    <citation type="journal article" date="2008" name="Nature">
        <title>The genome of Laccaria bicolor provides insights into mycorrhizal symbiosis.</title>
        <authorList>
            <person name="Martin F."/>
            <person name="Aerts A."/>
            <person name="Ahren D."/>
            <person name="Brun A."/>
            <person name="Danchin E.G.J."/>
            <person name="Duchaussoy F."/>
            <person name="Gibon J."/>
            <person name="Kohler A."/>
            <person name="Lindquist E."/>
            <person name="Pereda V."/>
            <person name="Salamov A."/>
            <person name="Shapiro H.J."/>
            <person name="Wuyts J."/>
            <person name="Blaudez D."/>
            <person name="Buee M."/>
            <person name="Brokstein P."/>
            <person name="Canbaeck B."/>
            <person name="Cohen D."/>
            <person name="Courty P.E."/>
            <person name="Coutinho P.M."/>
            <person name="Delaruelle C."/>
            <person name="Detter J.C."/>
            <person name="Deveau A."/>
            <person name="DiFazio S."/>
            <person name="Duplessis S."/>
            <person name="Fraissinet-Tachet L."/>
            <person name="Lucic E."/>
            <person name="Frey-Klett P."/>
            <person name="Fourrey C."/>
            <person name="Feussner I."/>
            <person name="Gay G."/>
            <person name="Grimwood J."/>
            <person name="Hoegger P.J."/>
            <person name="Jain P."/>
            <person name="Kilaru S."/>
            <person name="Labbe J."/>
            <person name="Lin Y.C."/>
            <person name="Legue V."/>
            <person name="Le Tacon F."/>
            <person name="Marmeisse R."/>
            <person name="Melayah D."/>
            <person name="Montanini B."/>
            <person name="Muratet M."/>
            <person name="Nehls U."/>
            <person name="Niculita-Hirzel H."/>
            <person name="Oudot-Le Secq M.P."/>
            <person name="Peter M."/>
            <person name="Quesneville H."/>
            <person name="Rajashekar B."/>
            <person name="Reich M."/>
            <person name="Rouhier N."/>
            <person name="Schmutz J."/>
            <person name="Yin T."/>
            <person name="Chalot M."/>
            <person name="Henrissat B."/>
            <person name="Kuees U."/>
            <person name="Lucas S."/>
            <person name="Van de Peer Y."/>
            <person name="Podila G.K."/>
            <person name="Polle A."/>
            <person name="Pukkila P.J."/>
            <person name="Richardson P.M."/>
            <person name="Rouze P."/>
            <person name="Sanders I.R."/>
            <person name="Stajich J.E."/>
            <person name="Tunlid A."/>
            <person name="Tuskan G."/>
            <person name="Grigoriev I.V."/>
        </authorList>
    </citation>
    <scope>NUCLEOTIDE SEQUENCE [LARGE SCALE GENOMIC DNA]</scope>
    <source>
        <strain>S238N-H82 / ATCC MYA-4686</strain>
    </source>
</reference>
<sequence>MQYTDTHHEPSSVSAPSDGSRTHTLTSGATRDLENEDESEAPRIVGTLKLRGAQSKKQQSKAKVAWDEDVVDNEGCGKKKSKICCIYHKPRRFDESSDESSDSAASDSDCSHGSPADNAGLRSPSTLGHHVTNIRGDDAEPNAYEATPSSGKKRRNV</sequence>
<evidence type="ECO:0000250" key="1"/>
<evidence type="ECO:0000256" key="2">
    <source>
        <dbReference type="SAM" id="MobiDB-lite"/>
    </source>
</evidence>
<evidence type="ECO:0000305" key="3"/>
<comment type="function">
    <text evidence="1">Regulator of type 1 phosphatases which maintains protein phosphatase activity under strict control.</text>
</comment>
<comment type="subcellular location">
    <subcellularLocation>
        <location evidence="1">Nucleus</location>
    </subcellularLocation>
</comment>
<comment type="similarity">
    <text evidence="3">Belongs to the YPI1 family.</text>
</comment>